<name>INT3_DROGR</name>
<keyword id="KW-0963">Cytoplasm</keyword>
<keyword id="KW-0539">Nucleus</keyword>
<keyword id="KW-0597">Phosphoprotein</keyword>
<keyword id="KW-1185">Reference proteome</keyword>
<comment type="function">
    <text evidence="3">Component of the integrator complex, a multiprotein complex that terminates RNA polymerase II (Pol II) transcription in the promoter-proximal region of genes. The integrator complex provides a quality checkpoint during transcription elongation by driving premature transcription termination of transcripts that are unfavorably configured for transcriptional elongation: the complex terminates transcription by (1) catalyzing dephosphorylation of the C-terminal domain (CTD) of Pol II subunit Polr2A/Rbp1 and Spt5, and (2) degrading the exiting nascent RNA transcript via endonuclease activity. The integrator complex is also involved in the 3'-end processing of the U7 snRNA, and also the spliceosomal snRNAs U1, U2, U4 and U5.</text>
</comment>
<comment type="subunit">
    <text evidence="3">Belongs to the multiprotein complex Integrator, at least composed of IntS1, IntS2, IntS3, IntS4, omd/IntS5, IntS6, defl/IntS7, IntS8, IntS9, IntS10, IntS11, IntS12, asun/IntS13, IntS14 and IntS15. The core complex associates with protein phosphatase 2A subunits mts/PP2A and Pp2A-29B, to form the Integrator-PP2A (INTAC) complex.</text>
</comment>
<comment type="subcellular location">
    <subcellularLocation>
        <location evidence="2">Nucleus</location>
    </subcellularLocation>
    <subcellularLocation>
        <location evidence="2">Cytoplasm</location>
    </subcellularLocation>
</comment>
<comment type="similarity">
    <text evidence="5">Belongs to the Integrator subunit 3 family.</text>
</comment>
<protein>
    <recommendedName>
        <fullName>Integrator complex subunit 3 homolog</fullName>
    </recommendedName>
    <alternativeName>
        <fullName>SOSS complex subunit A homolog</fullName>
    </alternativeName>
</protein>
<reference key="1">
    <citation type="journal article" date="2007" name="Nature">
        <title>Evolution of genes and genomes on the Drosophila phylogeny.</title>
        <authorList>
            <consortium name="Drosophila 12 genomes consortium"/>
        </authorList>
    </citation>
    <scope>NUCLEOTIDE SEQUENCE [LARGE SCALE GENOMIC DNA]</scope>
    <source>
        <strain>Tucson 15287-2541.00</strain>
    </source>
</reference>
<gene>
    <name type="primary">IntS3</name>
    <name type="ORF">GH13349</name>
</gene>
<evidence type="ECO:0000250" key="1"/>
<evidence type="ECO:0000250" key="2">
    <source>
        <dbReference type="UniProtKB" id="Q68E01"/>
    </source>
</evidence>
<evidence type="ECO:0000250" key="3">
    <source>
        <dbReference type="UniProtKB" id="Q7PLS8"/>
    </source>
</evidence>
<evidence type="ECO:0000256" key="4">
    <source>
        <dbReference type="SAM" id="MobiDB-lite"/>
    </source>
</evidence>
<evidence type="ECO:0000305" key="5"/>
<accession>B4JPR2</accession>
<dbReference type="EMBL" id="CH916372">
    <property type="protein sequence ID" value="EDV98892.1"/>
    <property type="molecule type" value="Genomic_DNA"/>
</dbReference>
<dbReference type="SMR" id="B4JPR2"/>
<dbReference type="FunCoup" id="B4JPR2">
    <property type="interactions" value="2003"/>
</dbReference>
<dbReference type="STRING" id="7222.B4JPR2"/>
<dbReference type="EnsemblMetazoa" id="FBtr0148763">
    <property type="protein sequence ID" value="FBpp0147255"/>
    <property type="gene ID" value="FBgn0120825"/>
</dbReference>
<dbReference type="EnsemblMetazoa" id="XM_001992931.3">
    <property type="protein sequence ID" value="XP_001992967.1"/>
    <property type="gene ID" value="LOC6566426"/>
</dbReference>
<dbReference type="GeneID" id="6566426"/>
<dbReference type="KEGG" id="dgr:6566426"/>
<dbReference type="CTD" id="65123"/>
<dbReference type="eggNOG" id="KOG4262">
    <property type="taxonomic scope" value="Eukaryota"/>
</dbReference>
<dbReference type="HOGENOM" id="CLU_007659_0_0_1"/>
<dbReference type="InParanoid" id="B4JPR2"/>
<dbReference type="OMA" id="FEQYCLW"/>
<dbReference type="OrthoDB" id="2021145at2759"/>
<dbReference type="PhylomeDB" id="B4JPR2"/>
<dbReference type="Proteomes" id="UP000001070">
    <property type="component" value="Unassembled WGS sequence"/>
</dbReference>
<dbReference type="GO" id="GO:0005737">
    <property type="term" value="C:cytoplasm"/>
    <property type="evidence" value="ECO:0007669"/>
    <property type="project" value="UniProtKB-SubCell"/>
</dbReference>
<dbReference type="GO" id="GO:0005634">
    <property type="term" value="C:nucleus"/>
    <property type="evidence" value="ECO:0007669"/>
    <property type="project" value="UniProtKB-SubCell"/>
</dbReference>
<dbReference type="InterPro" id="IPR056518">
    <property type="entry name" value="HEAT_Ints3_C"/>
</dbReference>
<dbReference type="InterPro" id="IPR045334">
    <property type="entry name" value="INTS3"/>
</dbReference>
<dbReference type="InterPro" id="IPR019333">
    <property type="entry name" value="INTS3_N"/>
</dbReference>
<dbReference type="PANTHER" id="PTHR13587">
    <property type="entry name" value="INTEGRATOR COMPLEX SUBUNIT 3"/>
    <property type="match status" value="1"/>
</dbReference>
<dbReference type="PANTHER" id="PTHR13587:SF7">
    <property type="entry name" value="INTEGRATOR COMPLEX SUBUNIT 3"/>
    <property type="match status" value="1"/>
</dbReference>
<dbReference type="Pfam" id="PF24566">
    <property type="entry name" value="HEAT_Ints3_C"/>
    <property type="match status" value="1"/>
</dbReference>
<dbReference type="Pfam" id="PF10189">
    <property type="entry name" value="Ints3_N"/>
    <property type="match status" value="1"/>
</dbReference>
<feature type="chain" id="PRO_0000385309" description="Integrator complex subunit 3 homolog">
    <location>
        <begin position="1"/>
        <end position="1083"/>
    </location>
</feature>
<feature type="region of interest" description="Disordered" evidence="4">
    <location>
        <begin position="551"/>
        <end position="579"/>
    </location>
</feature>
<feature type="region of interest" description="Disordered" evidence="4">
    <location>
        <begin position="929"/>
        <end position="953"/>
    </location>
</feature>
<feature type="region of interest" description="Disordered" evidence="4">
    <location>
        <begin position="1014"/>
        <end position="1083"/>
    </location>
</feature>
<feature type="compositionally biased region" description="Low complexity" evidence="4">
    <location>
        <begin position="942"/>
        <end position="953"/>
    </location>
</feature>
<feature type="compositionally biased region" description="Basic residues" evidence="4">
    <location>
        <begin position="1066"/>
        <end position="1077"/>
    </location>
</feature>
<feature type="modified residue" description="Phosphoserine" evidence="1">
    <location>
        <position position="1053"/>
    </location>
</feature>
<feature type="modified residue" description="Phosphoserine" evidence="1">
    <location>
        <position position="1054"/>
    </location>
</feature>
<feature type="modified residue" description="Phosphoserine" evidence="1">
    <location>
        <position position="1058"/>
    </location>
</feature>
<feature type="modified residue" description="Phosphoserine" evidence="1">
    <location>
        <position position="1059"/>
    </location>
</feature>
<proteinExistence type="inferred from homology"/>
<sequence length="1083" mass="124901">MEQQQQQQQQQKSVAHISKLFVCTAVDCKDEIEEKFERSYVSLQQQIAGLSDKEMHDILTQFVCKEKQHEEISIGFLYIILTDPAMAPKTYRDITLVSRDGMNVIVANLTLLVAEKYAKLTETARRQLIWVLREFVKHQVLSVENVIWNCLRQAGGGDVSHKNLYLVESLLDIFIEYRAWLETNPFLVQSSVYSFVRLIEDHANPALISLRQKEVKFTISLIRDRFHDIIPLGRDFVRLLQNVARIPEFELLWRDILYNPKSLHPTFNGIWHLLQIRTSRRFLQCRLLPEMERKLHFLASSVKFGNQKRYQDWFQDKYFATPESHSLRSDLIRFIINVIHPTNDMLCSDIIPRWAIIGWLISSCTNPIASANAKLSLFYDWLFFDPAKDNIMNIEPGILVMYHSIRNHPFVSSTLLDFLCRITKNFYVKNEDRIRLGVYNSLKLILDKQVIPNLHPLFESPKLDRELRNLIRENFREFVTPVANMPQSMYPATHTIQAPIFKKEADQRLMQGEIMDAGGGGAFVASSGTNMLVDDDNKIAIAPLESMERENEAVFSDDENLPSTSKNEENTDDDDDLPLSKVRLKEKPVPEKVELPDAIAESFEIFVTKRNSFTWEAFLKDFRTLPASALDETQLNYVISNTVLILRETLPQQNVFSESKTEEKYLAKSISYPLYGLFRFLYENEDKSKKPFQTLLSEICGRLTETGYLLLYFMKIHCKLQTRKNAQQSYQFKTTVYRQICEATDEKIGVCLVRDLDLLEKENTTIYLWLLPDIYREFKTIAINNTELLRITLRCIDAKNVRDIMYSIAQGKLTIFKQDGLLDCIRDSLEYETYEQFCLWQLIQAHDVPLKCIQDLLPELEAANHPEALSHLLLLLKNEEPTNEIIRLLLSREAKSRGDPFVTSALRFWCQRCEEKLSEIIASLLTSKYPSSSPNKRKRPSKGSSAASSTPSADHVLNHLEHYRRSCRHGTGTGLYVHDMMQRALQSAYSHSNESTKKQFSDLFALAAEDETTAVGRRGGSGRGRKQPVGKKDSSNHSASSKKNSDVVKTIYSSDENSSEEDWSKHKVTQPAKKRKKAINDSD</sequence>
<organism>
    <name type="scientific">Drosophila grimshawi</name>
    <name type="common">Hawaiian fruit fly</name>
    <name type="synonym">Idiomyia grimshawi</name>
    <dbReference type="NCBI Taxonomy" id="7222"/>
    <lineage>
        <taxon>Eukaryota</taxon>
        <taxon>Metazoa</taxon>
        <taxon>Ecdysozoa</taxon>
        <taxon>Arthropoda</taxon>
        <taxon>Hexapoda</taxon>
        <taxon>Insecta</taxon>
        <taxon>Pterygota</taxon>
        <taxon>Neoptera</taxon>
        <taxon>Endopterygota</taxon>
        <taxon>Diptera</taxon>
        <taxon>Brachycera</taxon>
        <taxon>Muscomorpha</taxon>
        <taxon>Ephydroidea</taxon>
        <taxon>Drosophilidae</taxon>
        <taxon>Drosophila</taxon>
        <taxon>Hawaiian Drosophila</taxon>
    </lineage>
</organism>